<comment type="function">
    <text evidence="1">Catalyzes the ATP-dependent 2-thiolation of cytidine in position 32 of tRNA, to form 2-thiocytidine (s(2)C32). The sulfur atoms are provided by the cysteine/cysteine desulfurase (IscS) system.</text>
</comment>
<comment type="catalytic activity">
    <reaction evidence="1">
        <text>cytidine(32) in tRNA + S-sulfanyl-L-cysteinyl-[cysteine desulfurase] + AH2 + ATP = 2-thiocytidine(32) in tRNA + L-cysteinyl-[cysteine desulfurase] + A + AMP + diphosphate + H(+)</text>
        <dbReference type="Rhea" id="RHEA:57048"/>
        <dbReference type="Rhea" id="RHEA-COMP:10288"/>
        <dbReference type="Rhea" id="RHEA-COMP:12157"/>
        <dbReference type="Rhea" id="RHEA-COMP:12158"/>
        <dbReference type="Rhea" id="RHEA-COMP:14821"/>
        <dbReference type="ChEBI" id="CHEBI:13193"/>
        <dbReference type="ChEBI" id="CHEBI:15378"/>
        <dbReference type="ChEBI" id="CHEBI:17499"/>
        <dbReference type="ChEBI" id="CHEBI:29950"/>
        <dbReference type="ChEBI" id="CHEBI:30616"/>
        <dbReference type="ChEBI" id="CHEBI:33019"/>
        <dbReference type="ChEBI" id="CHEBI:61963"/>
        <dbReference type="ChEBI" id="CHEBI:82748"/>
        <dbReference type="ChEBI" id="CHEBI:141453"/>
        <dbReference type="ChEBI" id="CHEBI:456215"/>
    </reaction>
    <physiologicalReaction direction="left-to-right" evidence="1">
        <dbReference type="Rhea" id="RHEA:57049"/>
    </physiologicalReaction>
</comment>
<comment type="cofactor">
    <cofactor evidence="1">
        <name>Mg(2+)</name>
        <dbReference type="ChEBI" id="CHEBI:18420"/>
    </cofactor>
</comment>
<comment type="cofactor">
    <cofactor evidence="1">
        <name>[4Fe-4S] cluster</name>
        <dbReference type="ChEBI" id="CHEBI:49883"/>
    </cofactor>
    <text evidence="1">Binds 1 [4Fe-4S] cluster per subunit. The cluster is chelated by three Cys residues, the fourth Fe has a free coordination site that may bind a sulfur atom transferred from the persulfide of IscS.</text>
</comment>
<comment type="pathway">
    <text evidence="1">tRNA modification.</text>
</comment>
<comment type="subunit">
    <text evidence="1">Homodimer.</text>
</comment>
<comment type="subcellular location">
    <subcellularLocation>
        <location evidence="1">Cytoplasm</location>
    </subcellularLocation>
</comment>
<comment type="miscellaneous">
    <text evidence="1">The thiolation reaction likely consists of two steps: a first activation step by ATP to form an adenylated intermediate of the target base of tRNA, and a second nucleophilic substitution step of the sulfur (S) atom supplied by the hydrosulfide attached to the Fe-S cluster.</text>
</comment>
<comment type="similarity">
    <text evidence="1">Belongs to the TtcA family.</text>
</comment>
<reference key="1">
    <citation type="journal article" date="2009" name="J. Bacteriol.">
        <title>Complete genome sequence of Rhodobacter sphaeroides KD131.</title>
        <authorList>
            <person name="Lim S.-K."/>
            <person name="Kim S.J."/>
            <person name="Cha S.H."/>
            <person name="Oh Y.-K."/>
            <person name="Rhee H.-J."/>
            <person name="Kim M.-S."/>
            <person name="Lee J.K."/>
        </authorList>
    </citation>
    <scope>NUCLEOTIDE SEQUENCE [LARGE SCALE GENOMIC DNA]</scope>
    <source>
        <strain>KD131 / KCTC 12085</strain>
    </source>
</reference>
<evidence type="ECO:0000255" key="1">
    <source>
        <dbReference type="HAMAP-Rule" id="MF_01850"/>
    </source>
</evidence>
<organism>
    <name type="scientific">Cereibacter sphaeroides (strain KD131 / KCTC 12085)</name>
    <name type="common">Rhodobacter sphaeroides</name>
    <dbReference type="NCBI Taxonomy" id="557760"/>
    <lineage>
        <taxon>Bacteria</taxon>
        <taxon>Pseudomonadati</taxon>
        <taxon>Pseudomonadota</taxon>
        <taxon>Alphaproteobacteria</taxon>
        <taxon>Rhodobacterales</taxon>
        <taxon>Paracoccaceae</taxon>
        <taxon>Cereibacter</taxon>
    </lineage>
</organism>
<accession>B9KNZ4</accession>
<gene>
    <name evidence="1" type="primary">ttcA</name>
    <name type="ordered locus">RSKD131_2456</name>
</gene>
<sequence length="292" mass="33150">MFDDQDEIHPLLAGAPQTTEFRKLRKRIVREVREAIETYGMVERGARWLVCLSGGKDSYTLLAVLHELKWRGLLPVDLLACNLDQGQPGFPATVLPEFLSRMGVPHRIEYQDTYSIVMDKIPQGRTYCALCSRLRRGNLYRIAREEGCSAVVLGHHRDDILETFFMNLFHGGRLATMPPKLVNEDGDLFVYRPLAFVAEADCEKFARDMAYPIIPCDLCGSQEGLQRQQVKQILDGWEARSPGRRQVMFRALMNARPSHLLDPGLFDFLGLATAPRAAEERQDEPPHLRGEA</sequence>
<proteinExistence type="inferred from homology"/>
<keyword id="KW-0004">4Fe-4S</keyword>
<keyword id="KW-0067">ATP-binding</keyword>
<keyword id="KW-0963">Cytoplasm</keyword>
<keyword id="KW-0408">Iron</keyword>
<keyword id="KW-0411">Iron-sulfur</keyword>
<keyword id="KW-0460">Magnesium</keyword>
<keyword id="KW-0479">Metal-binding</keyword>
<keyword id="KW-0547">Nucleotide-binding</keyword>
<keyword id="KW-0694">RNA-binding</keyword>
<keyword id="KW-0808">Transferase</keyword>
<keyword id="KW-0819">tRNA processing</keyword>
<keyword id="KW-0820">tRNA-binding</keyword>
<name>TTCA_CERSK</name>
<protein>
    <recommendedName>
        <fullName evidence="1">tRNA-cytidine(32) 2-sulfurtransferase</fullName>
        <ecNumber evidence="1">2.8.1.-</ecNumber>
    </recommendedName>
    <alternativeName>
        <fullName evidence="1">Two-thiocytidine biosynthesis protein A</fullName>
    </alternativeName>
    <alternativeName>
        <fullName evidence="1">tRNA 2-thiocytidine biosynthesis protein TtcA</fullName>
    </alternativeName>
</protein>
<dbReference type="EC" id="2.8.1.-" evidence="1"/>
<dbReference type="EMBL" id="CP001150">
    <property type="protein sequence ID" value="ACM02316.1"/>
    <property type="molecule type" value="Genomic_DNA"/>
</dbReference>
<dbReference type="RefSeq" id="WP_002721425.1">
    <property type="nucleotide sequence ID" value="NC_011963.1"/>
</dbReference>
<dbReference type="SMR" id="B9KNZ4"/>
<dbReference type="GeneID" id="67447836"/>
<dbReference type="KEGG" id="rsk:RSKD131_2456"/>
<dbReference type="HOGENOM" id="CLU_026481_0_0_5"/>
<dbReference type="GO" id="GO:0005737">
    <property type="term" value="C:cytoplasm"/>
    <property type="evidence" value="ECO:0007669"/>
    <property type="project" value="UniProtKB-SubCell"/>
</dbReference>
<dbReference type="GO" id="GO:0051539">
    <property type="term" value="F:4 iron, 4 sulfur cluster binding"/>
    <property type="evidence" value="ECO:0007669"/>
    <property type="project" value="UniProtKB-UniRule"/>
</dbReference>
<dbReference type="GO" id="GO:0005524">
    <property type="term" value="F:ATP binding"/>
    <property type="evidence" value="ECO:0007669"/>
    <property type="project" value="UniProtKB-UniRule"/>
</dbReference>
<dbReference type="GO" id="GO:0000287">
    <property type="term" value="F:magnesium ion binding"/>
    <property type="evidence" value="ECO:0007669"/>
    <property type="project" value="UniProtKB-UniRule"/>
</dbReference>
<dbReference type="GO" id="GO:0016783">
    <property type="term" value="F:sulfurtransferase activity"/>
    <property type="evidence" value="ECO:0007669"/>
    <property type="project" value="UniProtKB-UniRule"/>
</dbReference>
<dbReference type="GO" id="GO:0000049">
    <property type="term" value="F:tRNA binding"/>
    <property type="evidence" value="ECO:0007669"/>
    <property type="project" value="UniProtKB-KW"/>
</dbReference>
<dbReference type="GO" id="GO:0034227">
    <property type="term" value="P:tRNA thio-modification"/>
    <property type="evidence" value="ECO:0007669"/>
    <property type="project" value="UniProtKB-UniRule"/>
</dbReference>
<dbReference type="CDD" id="cd24138">
    <property type="entry name" value="TtcA-like"/>
    <property type="match status" value="1"/>
</dbReference>
<dbReference type="Gene3D" id="3.40.50.620">
    <property type="entry name" value="HUPs"/>
    <property type="match status" value="1"/>
</dbReference>
<dbReference type="HAMAP" id="MF_01850">
    <property type="entry name" value="TtcA"/>
    <property type="match status" value="1"/>
</dbReference>
<dbReference type="InterPro" id="IPR014729">
    <property type="entry name" value="Rossmann-like_a/b/a_fold"/>
</dbReference>
<dbReference type="InterPro" id="IPR011063">
    <property type="entry name" value="TilS/TtcA_N"/>
</dbReference>
<dbReference type="InterPro" id="IPR012089">
    <property type="entry name" value="tRNA_Cyd_32_2_STrfase"/>
</dbReference>
<dbReference type="InterPro" id="IPR035107">
    <property type="entry name" value="tRNA_thiolation_TtcA_Ctu1"/>
</dbReference>
<dbReference type="NCBIfam" id="NF007972">
    <property type="entry name" value="PRK10696.1"/>
    <property type="match status" value="1"/>
</dbReference>
<dbReference type="PANTHER" id="PTHR43686:SF1">
    <property type="entry name" value="AMINOTRAN_5 DOMAIN-CONTAINING PROTEIN"/>
    <property type="match status" value="1"/>
</dbReference>
<dbReference type="PANTHER" id="PTHR43686">
    <property type="entry name" value="SULFURTRANSFERASE-RELATED"/>
    <property type="match status" value="1"/>
</dbReference>
<dbReference type="Pfam" id="PF01171">
    <property type="entry name" value="ATP_bind_3"/>
    <property type="match status" value="1"/>
</dbReference>
<dbReference type="PIRSF" id="PIRSF004976">
    <property type="entry name" value="ATPase_YdaO"/>
    <property type="match status" value="1"/>
</dbReference>
<dbReference type="SUPFAM" id="SSF52402">
    <property type="entry name" value="Adenine nucleotide alpha hydrolases-like"/>
    <property type="match status" value="1"/>
</dbReference>
<feature type="chain" id="PRO_1000188652" description="tRNA-cytidine(32) 2-sulfurtransferase">
    <location>
        <begin position="1"/>
        <end position="292"/>
    </location>
</feature>
<feature type="short sequence motif" description="PP-loop motif" evidence="1">
    <location>
        <begin position="53"/>
        <end position="58"/>
    </location>
</feature>
<feature type="binding site" evidence="1">
    <location>
        <position position="128"/>
    </location>
    <ligand>
        <name>[4Fe-4S] cluster</name>
        <dbReference type="ChEBI" id="CHEBI:49883"/>
    </ligand>
</feature>
<feature type="binding site" evidence="1">
    <location>
        <position position="131"/>
    </location>
    <ligand>
        <name>[4Fe-4S] cluster</name>
        <dbReference type="ChEBI" id="CHEBI:49883"/>
    </ligand>
</feature>
<feature type="binding site" evidence="1">
    <location>
        <position position="219"/>
    </location>
    <ligand>
        <name>[4Fe-4S] cluster</name>
        <dbReference type="ChEBI" id="CHEBI:49883"/>
    </ligand>
</feature>